<accession>Q57A58</accession>
<reference key="1">
    <citation type="journal article" date="2005" name="J. Bacteriol.">
        <title>Completion of the genome sequence of Brucella abortus and comparison to the highly similar genomes of Brucella melitensis and Brucella suis.</title>
        <authorList>
            <person name="Halling S.M."/>
            <person name="Peterson-Burch B.D."/>
            <person name="Bricker B.J."/>
            <person name="Zuerner R.L."/>
            <person name="Qing Z."/>
            <person name="Li L.-L."/>
            <person name="Kapur V."/>
            <person name="Alt D.P."/>
            <person name="Olsen S.C."/>
        </authorList>
    </citation>
    <scope>NUCLEOTIDE SEQUENCE [LARGE SCALE GENOMIC DNA]</scope>
    <source>
        <strain>9-941</strain>
    </source>
</reference>
<name>LIVB4_BRUAB</name>
<gene>
    <name type="ordered locus">BruAb2_0024</name>
</gene>
<protein>
    <recommendedName>
        <fullName>Leu/Ile/Val-binding protein homolog 4</fullName>
    </recommendedName>
</protein>
<proteinExistence type="inferred from homology"/>
<keyword id="KW-0029">Amino-acid transport</keyword>
<keyword id="KW-0732">Signal</keyword>
<keyword id="KW-0813">Transport</keyword>
<evidence type="ECO:0000255" key="1"/>
<evidence type="ECO:0000305" key="2"/>
<organism>
    <name type="scientific">Brucella abortus biovar 1 (strain 9-941)</name>
    <dbReference type="NCBI Taxonomy" id="262698"/>
    <lineage>
        <taxon>Bacteria</taxon>
        <taxon>Pseudomonadati</taxon>
        <taxon>Pseudomonadota</taxon>
        <taxon>Alphaproteobacteria</taxon>
        <taxon>Hyphomicrobiales</taxon>
        <taxon>Brucellaceae</taxon>
        <taxon>Brucella/Ochrobactrum group</taxon>
        <taxon>Brucella</taxon>
    </lineage>
</organism>
<dbReference type="EMBL" id="AE017224">
    <property type="protein sequence ID" value="AAX75476.1"/>
    <property type="status" value="ALT_INIT"/>
    <property type="molecule type" value="Genomic_DNA"/>
</dbReference>
<dbReference type="RefSeq" id="WP_002966556.1">
    <property type="nucleotide sequence ID" value="NC_006933.1"/>
</dbReference>
<dbReference type="SMR" id="Q57A58"/>
<dbReference type="EnsemblBacteria" id="AAX75476">
    <property type="protein sequence ID" value="AAX75476"/>
    <property type="gene ID" value="BruAb2_0024"/>
</dbReference>
<dbReference type="KEGG" id="bmb:BruAb2_0024"/>
<dbReference type="HOGENOM" id="CLU_027128_3_0_5"/>
<dbReference type="Proteomes" id="UP000000540">
    <property type="component" value="Chromosome II"/>
</dbReference>
<dbReference type="GO" id="GO:0006865">
    <property type="term" value="P:amino acid transport"/>
    <property type="evidence" value="ECO:0007669"/>
    <property type="project" value="UniProtKB-KW"/>
</dbReference>
<dbReference type="CDD" id="cd06329">
    <property type="entry name" value="PBP1_SBP-like"/>
    <property type="match status" value="1"/>
</dbReference>
<dbReference type="Gene3D" id="3.40.50.2300">
    <property type="match status" value="2"/>
</dbReference>
<dbReference type="InterPro" id="IPR051010">
    <property type="entry name" value="BCAA_transport"/>
</dbReference>
<dbReference type="InterPro" id="IPR028081">
    <property type="entry name" value="Leu-bd"/>
</dbReference>
<dbReference type="InterPro" id="IPR000709">
    <property type="entry name" value="Leu_Ile_Val-bd"/>
</dbReference>
<dbReference type="InterPro" id="IPR028082">
    <property type="entry name" value="Peripla_BP_I"/>
</dbReference>
<dbReference type="PANTHER" id="PTHR30483">
    <property type="entry name" value="LEUCINE-SPECIFIC-BINDING PROTEIN"/>
    <property type="match status" value="1"/>
</dbReference>
<dbReference type="PANTHER" id="PTHR30483:SF6">
    <property type="entry name" value="PERIPLASMIC BINDING PROTEIN OF ABC TRANSPORTER FOR NATURAL AMINO ACIDS"/>
    <property type="match status" value="1"/>
</dbReference>
<dbReference type="Pfam" id="PF13458">
    <property type="entry name" value="Peripla_BP_6"/>
    <property type="match status" value="1"/>
</dbReference>
<dbReference type="PRINTS" id="PR00337">
    <property type="entry name" value="LEUILEVALBP"/>
</dbReference>
<dbReference type="SUPFAM" id="SSF53822">
    <property type="entry name" value="Periplasmic binding protein-like I"/>
    <property type="match status" value="1"/>
</dbReference>
<sequence>MSLKVFLQAGVACAALSLAGAAGASAEPLKIALVETLSGPQASTGLLYRAAVLYQLGKINEAGGFNGEKIQILEYDNQGGPVGAADRVKAAIADGAQIIVQGSSSAVAGQITEDVRKYNLRNKGKEVLYLNLGAEALELTGSKCHFYHFRFSPNAAIRFKTVAQGMKDKGILGERAYSINQNYSWGVDVENTVVANAKEIGYEVVDKTLHEVNKIQDFSPYVAKIQAANVDTVFTGNWSNDLLLLMKAASGAGLKAKFATSFLDQPGNIGNAGAIAEGHIVSTPFNPEANGEASMAFAEDYKKVTGHYPSYVEPAAVFGLQLFGEALKNVKPGEGKINTTDIALAIENASVKTPMGDYSMRSDDHQAKFPMVVQEVSKKARIKADGTEYGFLPFKTFTGDESIDPVQESCSMKRPG</sequence>
<feature type="signal peptide" evidence="1">
    <location>
        <begin position="1"/>
        <end position="26"/>
    </location>
</feature>
<feature type="chain" id="PRO_0000285737" description="Leu/Ile/Val-binding protein homolog 4">
    <location>
        <begin position="27"/>
        <end position="416"/>
    </location>
</feature>
<comment type="function">
    <text evidence="2">Component of an amino-acid transport system.</text>
</comment>
<comment type="similarity">
    <text evidence="2">Belongs to the leucine-binding protein family.</text>
</comment>
<comment type="sequence caution" evidence="2">
    <conflict type="erroneous initiation">
        <sequence resource="EMBL-CDS" id="AAX75476"/>
    </conflict>
</comment>